<gene>
    <name type="primary">rsmE</name>
    <name type="ordered locus">BUsg_395</name>
</gene>
<protein>
    <recommendedName>
        <fullName>Ribosomal RNA small subunit methyltransferase E</fullName>
        <ecNumber>2.1.1.193</ecNumber>
    </recommendedName>
    <alternativeName>
        <fullName>16S rRNA m3U1498 methyltransferase</fullName>
    </alternativeName>
</protein>
<keyword id="KW-0963">Cytoplasm</keyword>
<keyword id="KW-0489">Methyltransferase</keyword>
<keyword id="KW-0698">rRNA processing</keyword>
<keyword id="KW-0949">S-adenosyl-L-methionine</keyword>
<keyword id="KW-0808">Transferase</keyword>
<name>RSME_BUCAP</name>
<reference key="1">
    <citation type="journal article" date="2002" name="Science">
        <title>50 million years of genomic stasis in endosymbiotic bacteria.</title>
        <authorList>
            <person name="Tamas I."/>
            <person name="Klasson L."/>
            <person name="Canbaeck B."/>
            <person name="Naeslund A.K."/>
            <person name="Eriksson A.-S."/>
            <person name="Wernegreen J.J."/>
            <person name="Sandstroem J.P."/>
            <person name="Moran N.A."/>
            <person name="Andersson S.G.E."/>
        </authorList>
    </citation>
    <scope>NUCLEOTIDE SEQUENCE [LARGE SCALE GENOMIC DNA]</scope>
    <source>
        <strain>Sg</strain>
    </source>
</reference>
<feature type="chain" id="PRO_0000176209" description="Ribosomal RNA small subunit methyltransferase E">
    <location>
        <begin position="1"/>
        <end position="246"/>
    </location>
</feature>
<organism>
    <name type="scientific">Buchnera aphidicola subsp. Schizaphis graminum (strain Sg)</name>
    <dbReference type="NCBI Taxonomy" id="198804"/>
    <lineage>
        <taxon>Bacteria</taxon>
        <taxon>Pseudomonadati</taxon>
        <taxon>Pseudomonadota</taxon>
        <taxon>Gammaproteobacteria</taxon>
        <taxon>Enterobacterales</taxon>
        <taxon>Erwiniaceae</taxon>
        <taxon>Buchnera</taxon>
    </lineage>
</organism>
<comment type="function">
    <text evidence="1">Specifically methylates the N3 position of the uracil ring of uridine 1498 (m3U1498) in 16S rRNA. Acts on the fully assembled 30S ribosomal subunit (By similarity).</text>
</comment>
<comment type="catalytic activity">
    <reaction>
        <text>uridine(1498) in 16S rRNA + S-adenosyl-L-methionine = N(3)-methyluridine(1498) in 16S rRNA + S-adenosyl-L-homocysteine + H(+)</text>
        <dbReference type="Rhea" id="RHEA:42920"/>
        <dbReference type="Rhea" id="RHEA-COMP:10283"/>
        <dbReference type="Rhea" id="RHEA-COMP:10284"/>
        <dbReference type="ChEBI" id="CHEBI:15378"/>
        <dbReference type="ChEBI" id="CHEBI:57856"/>
        <dbReference type="ChEBI" id="CHEBI:59789"/>
        <dbReference type="ChEBI" id="CHEBI:65315"/>
        <dbReference type="ChEBI" id="CHEBI:74502"/>
        <dbReference type="EC" id="2.1.1.193"/>
    </reaction>
</comment>
<comment type="subunit">
    <text evidence="1">Homodimer.</text>
</comment>
<comment type="subcellular location">
    <subcellularLocation>
        <location evidence="1">Cytoplasm</location>
    </subcellularLocation>
</comment>
<comment type="similarity">
    <text evidence="2">Belongs to the RNA methyltransferase RsmE family.</text>
</comment>
<evidence type="ECO:0000250" key="1"/>
<evidence type="ECO:0000305" key="2"/>
<dbReference type="EC" id="2.1.1.193"/>
<dbReference type="EMBL" id="AE013218">
    <property type="protein sequence ID" value="AAM67946.1"/>
    <property type="molecule type" value="Genomic_DNA"/>
</dbReference>
<dbReference type="RefSeq" id="WP_011053913.1">
    <property type="nucleotide sequence ID" value="NC_004061.1"/>
</dbReference>
<dbReference type="SMR" id="Q8K9E4"/>
<dbReference type="STRING" id="198804.BUsg_395"/>
<dbReference type="GeneID" id="93003866"/>
<dbReference type="KEGG" id="bas:BUsg_395"/>
<dbReference type="eggNOG" id="COG1385">
    <property type="taxonomic scope" value="Bacteria"/>
</dbReference>
<dbReference type="HOGENOM" id="CLU_067442_5_1_6"/>
<dbReference type="Proteomes" id="UP000000416">
    <property type="component" value="Chromosome"/>
</dbReference>
<dbReference type="GO" id="GO:0005737">
    <property type="term" value="C:cytoplasm"/>
    <property type="evidence" value="ECO:0007669"/>
    <property type="project" value="UniProtKB-SubCell"/>
</dbReference>
<dbReference type="GO" id="GO:0070042">
    <property type="term" value="F:rRNA (uridine-N3-)-methyltransferase activity"/>
    <property type="evidence" value="ECO:0007669"/>
    <property type="project" value="TreeGrafter"/>
</dbReference>
<dbReference type="GO" id="GO:0070475">
    <property type="term" value="P:rRNA base methylation"/>
    <property type="evidence" value="ECO:0007669"/>
    <property type="project" value="TreeGrafter"/>
</dbReference>
<dbReference type="CDD" id="cd18084">
    <property type="entry name" value="RsmE-like"/>
    <property type="match status" value="1"/>
</dbReference>
<dbReference type="Gene3D" id="3.40.1280.10">
    <property type="match status" value="1"/>
</dbReference>
<dbReference type="Gene3D" id="2.40.240.20">
    <property type="entry name" value="Hypothetical PUA domain-like, domain 1"/>
    <property type="match status" value="1"/>
</dbReference>
<dbReference type="InterPro" id="IPR029028">
    <property type="entry name" value="Alpha/beta_knot_MTases"/>
</dbReference>
<dbReference type="InterPro" id="IPR015947">
    <property type="entry name" value="PUA-like_sf"/>
</dbReference>
<dbReference type="InterPro" id="IPR006700">
    <property type="entry name" value="RsmE"/>
</dbReference>
<dbReference type="InterPro" id="IPR046886">
    <property type="entry name" value="RsmE_MTase_dom"/>
</dbReference>
<dbReference type="InterPro" id="IPR046887">
    <property type="entry name" value="RsmE_PUA-like"/>
</dbReference>
<dbReference type="InterPro" id="IPR029026">
    <property type="entry name" value="tRNA_m1G_MTases_N"/>
</dbReference>
<dbReference type="NCBIfam" id="NF008692">
    <property type="entry name" value="PRK11713.1-5"/>
    <property type="match status" value="1"/>
</dbReference>
<dbReference type="NCBIfam" id="TIGR00046">
    <property type="entry name" value="RsmE family RNA methyltransferase"/>
    <property type="match status" value="1"/>
</dbReference>
<dbReference type="PANTHER" id="PTHR30027:SF3">
    <property type="entry name" value="16S RRNA (URACIL(1498)-N(3))-METHYLTRANSFERASE"/>
    <property type="match status" value="1"/>
</dbReference>
<dbReference type="PANTHER" id="PTHR30027">
    <property type="entry name" value="RIBOSOMAL RNA SMALL SUBUNIT METHYLTRANSFERASE E"/>
    <property type="match status" value="1"/>
</dbReference>
<dbReference type="Pfam" id="PF04452">
    <property type="entry name" value="Methyltrans_RNA"/>
    <property type="match status" value="1"/>
</dbReference>
<dbReference type="Pfam" id="PF20260">
    <property type="entry name" value="PUA_4"/>
    <property type="match status" value="1"/>
</dbReference>
<dbReference type="PIRSF" id="PIRSF015601">
    <property type="entry name" value="MTase_slr0722"/>
    <property type="match status" value="1"/>
</dbReference>
<dbReference type="SUPFAM" id="SSF75217">
    <property type="entry name" value="alpha/beta knot"/>
    <property type="match status" value="1"/>
</dbReference>
<dbReference type="SUPFAM" id="SSF88697">
    <property type="entry name" value="PUA domain-like"/>
    <property type="match status" value="1"/>
</dbReference>
<sequence>MKKRIPRIYIKYFLQINQVISLSKSYTHYIKKVLRMKKKDKLEIFNNTNYIFFSEILEINNHTIEIIILKKQIKNLESPLLIHLGQVISKNEKMNFSIQKSVELGVNTITPLFSEYCNFQNKLICFPKKKIHWENIVISSCEQCHRNNIPEIKNPEYILPWCKRTYENETKIVFSPSATFTINELPEKINCVRLLIGSEGGFSFLEIEKIIQYGFIPIKLGPRILRTETAVIAAITALQIKFGDLS</sequence>
<accession>Q8K9E4</accession>
<proteinExistence type="inferred from homology"/>